<evidence type="ECO:0000255" key="1">
    <source>
        <dbReference type="HAMAP-Rule" id="MF_01331"/>
    </source>
</evidence>
<evidence type="ECO:0000305" key="2"/>
<keyword id="KW-0687">Ribonucleoprotein</keyword>
<keyword id="KW-0689">Ribosomal protein</keyword>
<keyword id="KW-0694">RNA-binding</keyword>
<keyword id="KW-0699">rRNA-binding</keyword>
<sequence length="155" mass="17800">MGRRFDYSFQNFDPERMARASGRDLRISPKLAVEVCRELRGMMLNDALRYLDDVIALRRPVPLKRYNDSQGHKPGKGFGPGRYPVKVAKAIKKVLLNAQNNAKQKGLDPDKLRIIHIAAHRGPVLRGWYPRAFGRPTPFNEQTTHIEVVVEEVRR</sequence>
<comment type="function">
    <text evidence="1">This protein binds specifically to 23S rRNA. It makes multiple contacts with different domains of the 23S rRNA in the assembled 50S subunit and ribosome.</text>
</comment>
<comment type="function">
    <text evidence="1">The globular domain of the protein is located near the polypeptide exit tunnel on the outside of the subunit, while an extended beta-hairpin is found that lines the wall of the exit tunnel in the center of the 70S ribosome.</text>
</comment>
<comment type="subunit">
    <text evidence="1">Part of the 50S ribosomal subunit.</text>
</comment>
<comment type="similarity">
    <text evidence="1">Belongs to the universal ribosomal protein uL22 family.</text>
</comment>
<feature type="chain" id="PRO_0000125282" description="Large ribosomal subunit protein uL22">
    <location>
        <begin position="1"/>
        <end position="155"/>
    </location>
</feature>
<accession>Q9V1U0</accession>
<accession>G8ZHX1</accession>
<dbReference type="EMBL" id="AJ248284">
    <property type="protein sequence ID" value="CAB49259.1"/>
    <property type="molecule type" value="Genomic_DNA"/>
</dbReference>
<dbReference type="EMBL" id="HE613800">
    <property type="protein sequence ID" value="CCE69714.1"/>
    <property type="molecule type" value="Genomic_DNA"/>
</dbReference>
<dbReference type="PIR" id="D75147">
    <property type="entry name" value="D75147"/>
</dbReference>
<dbReference type="RefSeq" id="WP_010867459.1">
    <property type="nucleotide sequence ID" value="NC_000868.1"/>
</dbReference>
<dbReference type="SMR" id="Q9V1U0"/>
<dbReference type="STRING" id="272844.PAB2396"/>
<dbReference type="KEGG" id="pab:PAB2396"/>
<dbReference type="PATRIC" id="fig|272844.11.peg.358"/>
<dbReference type="eggNOG" id="arCOG04098">
    <property type="taxonomic scope" value="Archaea"/>
</dbReference>
<dbReference type="HOGENOM" id="CLU_083987_0_2_2"/>
<dbReference type="OrthoDB" id="314984at2157"/>
<dbReference type="PhylomeDB" id="Q9V1U0"/>
<dbReference type="Proteomes" id="UP000000810">
    <property type="component" value="Chromosome"/>
</dbReference>
<dbReference type="Proteomes" id="UP000009139">
    <property type="component" value="Chromosome"/>
</dbReference>
<dbReference type="GO" id="GO:0022625">
    <property type="term" value="C:cytosolic large ribosomal subunit"/>
    <property type="evidence" value="ECO:0007669"/>
    <property type="project" value="TreeGrafter"/>
</dbReference>
<dbReference type="GO" id="GO:0019843">
    <property type="term" value="F:rRNA binding"/>
    <property type="evidence" value="ECO:0007669"/>
    <property type="project" value="UniProtKB-UniRule"/>
</dbReference>
<dbReference type="GO" id="GO:0003735">
    <property type="term" value="F:structural constituent of ribosome"/>
    <property type="evidence" value="ECO:0007669"/>
    <property type="project" value="InterPro"/>
</dbReference>
<dbReference type="GO" id="GO:0002181">
    <property type="term" value="P:cytoplasmic translation"/>
    <property type="evidence" value="ECO:0007669"/>
    <property type="project" value="TreeGrafter"/>
</dbReference>
<dbReference type="CDD" id="cd00336">
    <property type="entry name" value="Ribosomal_L22"/>
    <property type="match status" value="1"/>
</dbReference>
<dbReference type="FunFam" id="3.90.470.10:FF:000015">
    <property type="entry name" value="50S ribosomal protein L22"/>
    <property type="match status" value="1"/>
</dbReference>
<dbReference type="Gene3D" id="3.90.470.10">
    <property type="entry name" value="Ribosomal protein L22/L17"/>
    <property type="match status" value="1"/>
</dbReference>
<dbReference type="HAMAP" id="MF_01331_A">
    <property type="entry name" value="Ribosomal_uL22_A"/>
    <property type="match status" value="1"/>
</dbReference>
<dbReference type="InterPro" id="IPR001063">
    <property type="entry name" value="Ribosomal_uL22"/>
</dbReference>
<dbReference type="InterPro" id="IPR018260">
    <property type="entry name" value="Ribosomal_uL22_CS"/>
</dbReference>
<dbReference type="InterPro" id="IPR005721">
    <property type="entry name" value="Ribosomal_uL22_euk/arc"/>
</dbReference>
<dbReference type="InterPro" id="IPR036394">
    <property type="entry name" value="Ribosomal_uL22_sf"/>
</dbReference>
<dbReference type="NCBIfam" id="NF003260">
    <property type="entry name" value="PRK04223.1"/>
    <property type="match status" value="1"/>
</dbReference>
<dbReference type="NCBIfam" id="TIGR01038">
    <property type="entry name" value="uL22_arch_euk"/>
    <property type="match status" value="1"/>
</dbReference>
<dbReference type="PANTHER" id="PTHR11593">
    <property type="entry name" value="60S RIBOSOMAL PROTEIN L17"/>
    <property type="match status" value="1"/>
</dbReference>
<dbReference type="PANTHER" id="PTHR11593:SF10">
    <property type="entry name" value="60S RIBOSOMAL PROTEIN L17"/>
    <property type="match status" value="1"/>
</dbReference>
<dbReference type="Pfam" id="PF00237">
    <property type="entry name" value="Ribosomal_L22"/>
    <property type="match status" value="1"/>
</dbReference>
<dbReference type="SUPFAM" id="SSF54843">
    <property type="entry name" value="Ribosomal protein L22"/>
    <property type="match status" value="1"/>
</dbReference>
<dbReference type="PROSITE" id="PS00464">
    <property type="entry name" value="RIBOSOMAL_L22"/>
    <property type="match status" value="1"/>
</dbReference>
<protein>
    <recommendedName>
        <fullName evidence="1">Large ribosomal subunit protein uL22</fullName>
    </recommendedName>
    <alternativeName>
        <fullName evidence="2">50S ribosomal protein L22</fullName>
    </alternativeName>
</protein>
<organism>
    <name type="scientific">Pyrococcus abyssi (strain GE5 / Orsay)</name>
    <dbReference type="NCBI Taxonomy" id="272844"/>
    <lineage>
        <taxon>Archaea</taxon>
        <taxon>Methanobacteriati</taxon>
        <taxon>Methanobacteriota</taxon>
        <taxon>Thermococci</taxon>
        <taxon>Thermococcales</taxon>
        <taxon>Thermococcaceae</taxon>
        <taxon>Pyrococcus</taxon>
    </lineage>
</organism>
<proteinExistence type="inferred from homology"/>
<reference key="1">
    <citation type="journal article" date="2003" name="Mol. Microbiol.">
        <title>An integrated analysis of the genome of the hyperthermophilic archaeon Pyrococcus abyssi.</title>
        <authorList>
            <person name="Cohen G.N."/>
            <person name="Barbe V."/>
            <person name="Flament D."/>
            <person name="Galperin M."/>
            <person name="Heilig R."/>
            <person name="Lecompte O."/>
            <person name="Poch O."/>
            <person name="Prieur D."/>
            <person name="Querellou J."/>
            <person name="Ripp R."/>
            <person name="Thierry J.-C."/>
            <person name="Van der Oost J."/>
            <person name="Weissenbach J."/>
            <person name="Zivanovic Y."/>
            <person name="Forterre P."/>
        </authorList>
    </citation>
    <scope>NUCLEOTIDE SEQUENCE [LARGE SCALE GENOMIC DNA]</scope>
    <source>
        <strain>GE5 / Orsay</strain>
    </source>
</reference>
<reference key="2">
    <citation type="journal article" date="2012" name="Curr. Microbiol.">
        <title>Re-annotation of two hyperthermophilic archaea Pyrococcus abyssi GE5 and Pyrococcus furiosus DSM 3638.</title>
        <authorList>
            <person name="Gao J."/>
            <person name="Wang J."/>
        </authorList>
    </citation>
    <scope>GENOME REANNOTATION</scope>
    <source>
        <strain>GE5 / Orsay</strain>
    </source>
</reference>
<name>RL22_PYRAB</name>
<gene>
    <name evidence="1" type="primary">rpl22</name>
    <name type="ordered locus">PYRAB03370</name>
    <name type="ORF">PAB2396</name>
</gene>